<feature type="chain" id="PRO_0000248623" description="Uncharacterized protein R467">
    <location>
        <begin position="1"/>
        <end position="321"/>
    </location>
</feature>
<accession>Q5UQD4</accession>
<proteinExistence type="predicted"/>
<organism>
    <name type="scientific">Acanthamoeba polyphaga mimivirus</name>
    <name type="common">APMV</name>
    <dbReference type="NCBI Taxonomy" id="212035"/>
    <lineage>
        <taxon>Viruses</taxon>
        <taxon>Varidnaviria</taxon>
        <taxon>Bamfordvirae</taxon>
        <taxon>Nucleocytoviricota</taxon>
        <taxon>Megaviricetes</taxon>
        <taxon>Imitervirales</taxon>
        <taxon>Mimiviridae</taxon>
        <taxon>Megamimivirinae</taxon>
        <taxon>Mimivirus</taxon>
        <taxon>Mimivirus bradfordmassiliense</taxon>
    </lineage>
</organism>
<reference key="1">
    <citation type="journal article" date="2004" name="Science">
        <title>The 1.2-megabase genome sequence of Mimivirus.</title>
        <authorList>
            <person name="Raoult D."/>
            <person name="Audic S."/>
            <person name="Robert C."/>
            <person name="Abergel C."/>
            <person name="Renesto P."/>
            <person name="Ogata H."/>
            <person name="La Scola B."/>
            <person name="Susan M."/>
            <person name="Claverie J.-M."/>
        </authorList>
    </citation>
    <scope>NUCLEOTIDE SEQUENCE [LARGE SCALE GENOMIC DNA]</scope>
    <source>
        <strain>Rowbotham-Bradford</strain>
    </source>
</reference>
<keyword id="KW-1185">Reference proteome</keyword>
<sequence length="321" mass="36985">MYKMVDNLYNDIESDANIKEILTNAQDKLVILMFYSKGNPNSRRLLGHMEKIALNHCLSIFCVINMDKVQERDSRFFNNVTVPQFDFYYQTNRFATYTNLNTDKDIEQCVRMAEQYVVTQNNSRNNGQNNQSVNMFGSNSQMNTMNQINPMLVQQQILNNMQMTNPQMYTYLLQNPMTLNQLTQQQIQQMQQMQKQPMQSGMTNMINMPNVSNMIGMSNMNSIPNTIPQIPTNIATNQSSIPSIPSLSTNNNDPLPTMQQLEKWFKLFQMMSAMGILNTSATPIIPEQNQNQSNDEYEIEAVLPDGRKIYKLPDGRFGVCK</sequence>
<dbReference type="EMBL" id="AY653733">
    <property type="protein sequence ID" value="AAV50733.1"/>
    <property type="molecule type" value="Genomic_DNA"/>
</dbReference>
<dbReference type="SMR" id="Q5UQD4"/>
<dbReference type="KEGG" id="vg:9925092"/>
<dbReference type="OrthoDB" id="25137at10239"/>
<dbReference type="Proteomes" id="UP000001134">
    <property type="component" value="Genome"/>
</dbReference>
<dbReference type="Gene3D" id="3.40.30.10">
    <property type="entry name" value="Glutaredoxin"/>
    <property type="match status" value="1"/>
</dbReference>
<dbReference type="InterPro" id="IPR036249">
    <property type="entry name" value="Thioredoxin-like_sf"/>
</dbReference>
<dbReference type="SUPFAM" id="SSF52833">
    <property type="entry name" value="Thioredoxin-like"/>
    <property type="match status" value="1"/>
</dbReference>
<organismHost>
    <name type="scientific">Acanthamoeba polyphaga</name>
    <name type="common">Amoeba</name>
    <dbReference type="NCBI Taxonomy" id="5757"/>
</organismHost>
<name>YR467_MIMIV</name>
<gene>
    <name type="ordered locus">MIMI_R467</name>
</gene>
<protein>
    <recommendedName>
        <fullName>Uncharacterized protein R467</fullName>
    </recommendedName>
</protein>